<keyword id="KW-1185">Reference proteome</keyword>
<keyword id="KW-0687">Ribonucleoprotein</keyword>
<keyword id="KW-0689">Ribosomal protein</keyword>
<keyword id="KW-0694">RNA-binding</keyword>
<keyword id="KW-0699">rRNA-binding</keyword>
<dbReference type="EMBL" id="AE002098">
    <property type="protein sequence ID" value="AAF41696.1"/>
    <property type="molecule type" value="Genomic_DNA"/>
</dbReference>
<dbReference type="PIR" id="H81096">
    <property type="entry name" value="H81096"/>
</dbReference>
<dbReference type="RefSeq" id="NP_274340.1">
    <property type="nucleotide sequence ID" value="NC_003112.2"/>
</dbReference>
<dbReference type="RefSeq" id="WP_002213306.1">
    <property type="nucleotide sequence ID" value="NC_003112.2"/>
</dbReference>
<dbReference type="SMR" id="P0A0X7"/>
<dbReference type="FunCoup" id="P0A0X7">
    <property type="interactions" value="554"/>
</dbReference>
<dbReference type="STRING" id="122586.NMB1321"/>
<dbReference type="PaxDb" id="122586-NMB1321"/>
<dbReference type="GeneID" id="93385879"/>
<dbReference type="KEGG" id="nme:NMB1321"/>
<dbReference type="PATRIC" id="fig|122586.8.peg.1657"/>
<dbReference type="HOGENOM" id="CLU_148710_2_2_4"/>
<dbReference type="InParanoid" id="P0A0X7"/>
<dbReference type="OrthoDB" id="9812008at2"/>
<dbReference type="Proteomes" id="UP000000425">
    <property type="component" value="Chromosome"/>
</dbReference>
<dbReference type="GO" id="GO:0022627">
    <property type="term" value="C:cytosolic small ribosomal subunit"/>
    <property type="evidence" value="ECO:0000318"/>
    <property type="project" value="GO_Central"/>
</dbReference>
<dbReference type="GO" id="GO:0070181">
    <property type="term" value="F:small ribosomal subunit rRNA binding"/>
    <property type="evidence" value="ECO:0000318"/>
    <property type="project" value="GO_Central"/>
</dbReference>
<dbReference type="GO" id="GO:0003735">
    <property type="term" value="F:structural constituent of ribosome"/>
    <property type="evidence" value="ECO:0000318"/>
    <property type="project" value="GO_Central"/>
</dbReference>
<dbReference type="GO" id="GO:0006412">
    <property type="term" value="P:translation"/>
    <property type="evidence" value="ECO:0000318"/>
    <property type="project" value="GO_Central"/>
</dbReference>
<dbReference type="FunFam" id="4.10.640.10:FF:000001">
    <property type="entry name" value="30S ribosomal protein S18"/>
    <property type="match status" value="1"/>
</dbReference>
<dbReference type="Gene3D" id="4.10.640.10">
    <property type="entry name" value="Ribosomal protein S18"/>
    <property type="match status" value="1"/>
</dbReference>
<dbReference type="HAMAP" id="MF_00270">
    <property type="entry name" value="Ribosomal_bS18"/>
    <property type="match status" value="1"/>
</dbReference>
<dbReference type="InterPro" id="IPR001648">
    <property type="entry name" value="Ribosomal_bS18"/>
</dbReference>
<dbReference type="InterPro" id="IPR018275">
    <property type="entry name" value="Ribosomal_bS18_CS"/>
</dbReference>
<dbReference type="InterPro" id="IPR036870">
    <property type="entry name" value="Ribosomal_bS18_sf"/>
</dbReference>
<dbReference type="NCBIfam" id="TIGR00165">
    <property type="entry name" value="S18"/>
    <property type="match status" value="1"/>
</dbReference>
<dbReference type="PANTHER" id="PTHR13479">
    <property type="entry name" value="30S RIBOSOMAL PROTEIN S18"/>
    <property type="match status" value="1"/>
</dbReference>
<dbReference type="PANTHER" id="PTHR13479:SF40">
    <property type="entry name" value="SMALL RIBOSOMAL SUBUNIT PROTEIN BS18M"/>
    <property type="match status" value="1"/>
</dbReference>
<dbReference type="Pfam" id="PF01084">
    <property type="entry name" value="Ribosomal_S18"/>
    <property type="match status" value="1"/>
</dbReference>
<dbReference type="PRINTS" id="PR00974">
    <property type="entry name" value="RIBOSOMALS18"/>
</dbReference>
<dbReference type="SUPFAM" id="SSF46911">
    <property type="entry name" value="Ribosomal protein S18"/>
    <property type="match status" value="1"/>
</dbReference>
<dbReference type="PROSITE" id="PS00057">
    <property type="entry name" value="RIBOSOMAL_S18"/>
    <property type="match status" value="1"/>
</dbReference>
<evidence type="ECO:0000255" key="1">
    <source>
        <dbReference type="HAMAP-Rule" id="MF_00270"/>
    </source>
</evidence>
<evidence type="ECO:0000305" key="2"/>
<comment type="function">
    <text evidence="1">Binds as a heterodimer with protein bS6 to the central domain of the 16S rRNA, where it helps stabilize the platform of the 30S subunit.</text>
</comment>
<comment type="subunit">
    <text evidence="1">Part of the 30S ribosomal subunit. Forms a tight heterodimer with protein bS6.</text>
</comment>
<comment type="similarity">
    <text evidence="1">Belongs to the bacterial ribosomal protein bS18 family.</text>
</comment>
<protein>
    <recommendedName>
        <fullName evidence="1">Small ribosomal subunit protein bS18</fullName>
    </recommendedName>
    <alternativeName>
        <fullName evidence="2">30S ribosomal protein S18</fullName>
    </alternativeName>
</protein>
<feature type="chain" id="PRO_0000111194" description="Small ribosomal subunit protein bS18">
    <location>
        <begin position="1"/>
        <end position="76"/>
    </location>
</feature>
<reference key="1">
    <citation type="journal article" date="2000" name="Science">
        <title>Complete genome sequence of Neisseria meningitidis serogroup B strain MC58.</title>
        <authorList>
            <person name="Tettelin H."/>
            <person name="Saunders N.J."/>
            <person name="Heidelberg J.F."/>
            <person name="Jeffries A.C."/>
            <person name="Nelson K.E."/>
            <person name="Eisen J.A."/>
            <person name="Ketchum K.A."/>
            <person name="Hood D.W."/>
            <person name="Peden J.F."/>
            <person name="Dodson R.J."/>
            <person name="Nelson W.C."/>
            <person name="Gwinn M.L."/>
            <person name="DeBoy R.T."/>
            <person name="Peterson J.D."/>
            <person name="Hickey E.K."/>
            <person name="Haft D.H."/>
            <person name="Salzberg S.L."/>
            <person name="White O."/>
            <person name="Fleischmann R.D."/>
            <person name="Dougherty B.A."/>
            <person name="Mason T.M."/>
            <person name="Ciecko A."/>
            <person name="Parksey D.S."/>
            <person name="Blair E."/>
            <person name="Cittone H."/>
            <person name="Clark E.B."/>
            <person name="Cotton M.D."/>
            <person name="Utterback T.R."/>
            <person name="Khouri H.M."/>
            <person name="Qin H."/>
            <person name="Vamathevan J.J."/>
            <person name="Gill J."/>
            <person name="Scarlato V."/>
            <person name="Masignani V."/>
            <person name="Pizza M."/>
            <person name="Grandi G."/>
            <person name="Sun L."/>
            <person name="Smith H.O."/>
            <person name="Fraser C.M."/>
            <person name="Moxon E.R."/>
            <person name="Rappuoli R."/>
            <person name="Venter J.C."/>
        </authorList>
    </citation>
    <scope>NUCLEOTIDE SEQUENCE [LARGE SCALE GENOMIC DNA]</scope>
    <source>
        <strain>ATCC BAA-335 / MC58</strain>
    </source>
</reference>
<organism>
    <name type="scientific">Neisseria meningitidis serogroup B (strain ATCC BAA-335 / MC58)</name>
    <dbReference type="NCBI Taxonomy" id="122586"/>
    <lineage>
        <taxon>Bacteria</taxon>
        <taxon>Pseudomonadati</taxon>
        <taxon>Pseudomonadota</taxon>
        <taxon>Betaproteobacteria</taxon>
        <taxon>Neisseriales</taxon>
        <taxon>Neisseriaceae</taxon>
        <taxon>Neisseria</taxon>
    </lineage>
</organism>
<gene>
    <name evidence="1" type="primary">rpsR</name>
    <name type="ordered locus">NMB1321</name>
</gene>
<name>RS18_NEIMB</name>
<accession>P0A0X7</accession>
<accession>O07815</accession>
<proteinExistence type="inferred from homology"/>
<sequence length="76" mass="8993">MARQSFKRRKFCRFTAEKIQEVDYKQVDLLKDFISENGKIIPARITGTKAFYQRQLAVAVKRARFLALLPYTDQHK</sequence>